<comment type="function">
    <text evidence="1">Covalent carrier of the coenzyme of citrate lyase.</text>
</comment>
<comment type="subunit">
    <text evidence="1">Oligomer with a subunit composition of (alpha,beta,gamma)6.</text>
</comment>
<comment type="subcellular location">
    <subcellularLocation>
        <location evidence="1">Cytoplasm</location>
    </subcellularLocation>
</comment>
<comment type="similarity">
    <text evidence="1">Belongs to the CitD family.</text>
</comment>
<proteinExistence type="inferred from homology"/>
<gene>
    <name evidence="1" type="primary">citD</name>
    <name type="ordered locus">PC1_1753</name>
</gene>
<organism>
    <name type="scientific">Pectobacterium carotovorum subsp. carotovorum (strain PC1)</name>
    <dbReference type="NCBI Taxonomy" id="561230"/>
    <lineage>
        <taxon>Bacteria</taxon>
        <taxon>Pseudomonadati</taxon>
        <taxon>Pseudomonadota</taxon>
        <taxon>Gammaproteobacteria</taxon>
        <taxon>Enterobacterales</taxon>
        <taxon>Pectobacteriaceae</taxon>
        <taxon>Pectobacterium</taxon>
    </lineage>
</organism>
<reference key="1">
    <citation type="submission" date="2009-07" db="EMBL/GenBank/DDBJ databases">
        <title>Complete sequence of Pectobacterium carotovorum subsp. carotovorum PC1.</title>
        <authorList>
            <consortium name="US DOE Joint Genome Institute"/>
            <person name="Lucas S."/>
            <person name="Copeland A."/>
            <person name="Lapidus A."/>
            <person name="Glavina del Rio T."/>
            <person name="Tice H."/>
            <person name="Bruce D."/>
            <person name="Goodwin L."/>
            <person name="Pitluck S."/>
            <person name="Munk A.C."/>
            <person name="Brettin T."/>
            <person name="Detter J.C."/>
            <person name="Han C."/>
            <person name="Tapia R."/>
            <person name="Larimer F."/>
            <person name="Land M."/>
            <person name="Hauser L."/>
            <person name="Kyrpides N."/>
            <person name="Mikhailova N."/>
            <person name="Balakrishnan V."/>
            <person name="Glasner J."/>
            <person name="Perna N.T."/>
        </authorList>
    </citation>
    <scope>NUCLEOTIDE SEQUENCE [LARGE SCALE GENOMIC DNA]</scope>
    <source>
        <strain>PC1</strain>
    </source>
</reference>
<accession>C6DF85</accession>
<protein>
    <recommendedName>
        <fullName evidence="1">Citrate lyase acyl carrier protein</fullName>
    </recommendedName>
    <alternativeName>
        <fullName evidence="1">Citrate lyase gamma chain</fullName>
    </alternativeName>
</protein>
<dbReference type="EMBL" id="CP001657">
    <property type="protein sequence ID" value="ACT12794.1"/>
    <property type="molecule type" value="Genomic_DNA"/>
</dbReference>
<dbReference type="RefSeq" id="WP_015840004.1">
    <property type="nucleotide sequence ID" value="NC_012917.1"/>
</dbReference>
<dbReference type="SMR" id="C6DF85"/>
<dbReference type="STRING" id="561230.PC1_1753"/>
<dbReference type="GeneID" id="67793756"/>
<dbReference type="KEGG" id="pct:PC1_1753"/>
<dbReference type="eggNOG" id="COG3052">
    <property type="taxonomic scope" value="Bacteria"/>
</dbReference>
<dbReference type="HOGENOM" id="CLU_158489_0_0_6"/>
<dbReference type="OrthoDB" id="9798736at2"/>
<dbReference type="Proteomes" id="UP000002736">
    <property type="component" value="Chromosome"/>
</dbReference>
<dbReference type="GO" id="GO:0005737">
    <property type="term" value="C:cytoplasm"/>
    <property type="evidence" value="ECO:0007669"/>
    <property type="project" value="UniProtKB-SubCell"/>
</dbReference>
<dbReference type="HAMAP" id="MF_00805">
    <property type="entry name" value="CitD"/>
    <property type="match status" value="1"/>
</dbReference>
<dbReference type="InterPro" id="IPR006495">
    <property type="entry name" value="CitD"/>
</dbReference>
<dbReference type="InterPro" id="IPR023439">
    <property type="entry name" value="Mal_deCO2ase/Cit_lyase_ACP"/>
</dbReference>
<dbReference type="NCBIfam" id="TIGR01608">
    <property type="entry name" value="citD"/>
    <property type="match status" value="1"/>
</dbReference>
<dbReference type="NCBIfam" id="NF009726">
    <property type="entry name" value="PRK13253.1"/>
    <property type="match status" value="1"/>
</dbReference>
<dbReference type="Pfam" id="PF06857">
    <property type="entry name" value="ACP"/>
    <property type="match status" value="1"/>
</dbReference>
<dbReference type="PIRSF" id="PIRSF002736">
    <property type="entry name" value="Citrt_lyas_gamma"/>
    <property type="match status" value="1"/>
</dbReference>
<keyword id="KW-0963">Cytoplasm</keyword>
<keyword id="KW-0597">Phosphoprotein</keyword>
<name>CITD_PECCP</name>
<sequence length="96" mass="10364">MKIVKESLAGTFESSDLLVKVAPADGKLTVVINSEVMKQFGHQIKQVVNETLAALGVQEGTIIVDDKGALDCVIRARVQSAVLRATDGQQIEWETL</sequence>
<evidence type="ECO:0000255" key="1">
    <source>
        <dbReference type="HAMAP-Rule" id="MF_00805"/>
    </source>
</evidence>
<feature type="chain" id="PRO_1000213003" description="Citrate lyase acyl carrier protein">
    <location>
        <begin position="1"/>
        <end position="96"/>
    </location>
</feature>
<feature type="modified residue" description="O-(phosphoribosyl dephospho-coenzyme A)serine" evidence="1">
    <location>
        <position position="14"/>
    </location>
</feature>